<dbReference type="EC" id="5.3.1.17"/>
<dbReference type="EMBL" id="AE006469">
    <property type="protein sequence ID" value="AAK64771.2"/>
    <property type="molecule type" value="Genomic_DNA"/>
</dbReference>
<dbReference type="PIR" id="A95276">
    <property type="entry name" value="A95276"/>
</dbReference>
<dbReference type="RefSeq" id="NP_435359.2">
    <property type="nucleotide sequence ID" value="NC_003037.1"/>
</dbReference>
<dbReference type="SMR" id="Q930T2"/>
<dbReference type="EnsemblBacteria" id="AAK64771">
    <property type="protein sequence ID" value="AAK64771"/>
    <property type="gene ID" value="SMa0214"/>
</dbReference>
<dbReference type="KEGG" id="sme:SMa0214"/>
<dbReference type="PATRIC" id="fig|266834.11.peg.117"/>
<dbReference type="HOGENOM" id="CLU_062609_0_0_5"/>
<dbReference type="OrthoDB" id="9770644at2"/>
<dbReference type="UniPathway" id="UPA00545">
    <property type="reaction ID" value="UER00826"/>
</dbReference>
<dbReference type="Proteomes" id="UP000001976">
    <property type="component" value="Plasmid pSymA"/>
</dbReference>
<dbReference type="GO" id="GO:0008697">
    <property type="term" value="F:4-deoxy-L-threo-5-hexosulose-uronate ketol-isomerase activity"/>
    <property type="evidence" value="ECO:0007669"/>
    <property type="project" value="UniProtKB-UniRule"/>
</dbReference>
<dbReference type="GO" id="GO:0008270">
    <property type="term" value="F:zinc ion binding"/>
    <property type="evidence" value="ECO:0007669"/>
    <property type="project" value="UniProtKB-UniRule"/>
</dbReference>
<dbReference type="GO" id="GO:0019698">
    <property type="term" value="P:D-galacturonate catabolic process"/>
    <property type="evidence" value="ECO:0007669"/>
    <property type="project" value="TreeGrafter"/>
</dbReference>
<dbReference type="GO" id="GO:0042840">
    <property type="term" value="P:D-glucuronate catabolic process"/>
    <property type="evidence" value="ECO:0007669"/>
    <property type="project" value="TreeGrafter"/>
</dbReference>
<dbReference type="GO" id="GO:0045490">
    <property type="term" value="P:pectin catabolic process"/>
    <property type="evidence" value="ECO:0007669"/>
    <property type="project" value="UniProtKB-UniRule"/>
</dbReference>
<dbReference type="CDD" id="cd20491">
    <property type="entry name" value="cupin_KduI_C"/>
    <property type="match status" value="1"/>
</dbReference>
<dbReference type="CDD" id="cd20294">
    <property type="entry name" value="cupin_KduI_N"/>
    <property type="match status" value="1"/>
</dbReference>
<dbReference type="Gene3D" id="2.60.120.10">
    <property type="entry name" value="Jelly Rolls"/>
    <property type="match status" value="1"/>
</dbReference>
<dbReference type="Gene3D" id="2.60.120.520">
    <property type="entry name" value="pectin degrading enzyme 5-keto 4- deoxyuronate isomerase, domain 1"/>
    <property type="match status" value="1"/>
</dbReference>
<dbReference type="HAMAP" id="MF_00687">
    <property type="entry name" value="KduI"/>
    <property type="match status" value="1"/>
</dbReference>
<dbReference type="InterPro" id="IPR007045">
    <property type="entry name" value="KduI"/>
</dbReference>
<dbReference type="InterPro" id="IPR021120">
    <property type="entry name" value="KduI/IolB_isomerase"/>
</dbReference>
<dbReference type="InterPro" id="IPR027449">
    <property type="entry name" value="KduI_N"/>
</dbReference>
<dbReference type="InterPro" id="IPR014710">
    <property type="entry name" value="RmlC-like_jellyroll"/>
</dbReference>
<dbReference type="InterPro" id="IPR011051">
    <property type="entry name" value="RmlC_Cupin_sf"/>
</dbReference>
<dbReference type="NCBIfam" id="NF002091">
    <property type="entry name" value="PRK00924.1"/>
    <property type="match status" value="1"/>
</dbReference>
<dbReference type="PANTHER" id="PTHR38461">
    <property type="entry name" value="4-DEOXY-L-THREO-5-HEXOSULOSE-URONATE KETOL-ISOMERASE"/>
    <property type="match status" value="1"/>
</dbReference>
<dbReference type="PANTHER" id="PTHR38461:SF1">
    <property type="entry name" value="4-DEOXY-L-THREO-5-HEXOSULOSE-URONATE KETOL-ISOMERASE"/>
    <property type="match status" value="1"/>
</dbReference>
<dbReference type="Pfam" id="PF04962">
    <property type="entry name" value="KduI"/>
    <property type="match status" value="1"/>
</dbReference>
<dbReference type="PIRSF" id="PIRSF006625">
    <property type="entry name" value="KduI"/>
    <property type="match status" value="1"/>
</dbReference>
<dbReference type="SUPFAM" id="SSF51182">
    <property type="entry name" value="RmlC-like cupins"/>
    <property type="match status" value="1"/>
</dbReference>
<evidence type="ECO:0000250" key="1"/>
<evidence type="ECO:0000305" key="2"/>
<feature type="chain" id="PRO_0000215493" description="4-deoxy-L-threo-5-hexosulose-uronate ketol-isomerase 1">
    <location>
        <begin position="1"/>
        <end position="280"/>
    </location>
</feature>
<feature type="binding site" evidence="1">
    <location>
        <position position="198"/>
    </location>
    <ligand>
        <name>Zn(2+)</name>
        <dbReference type="ChEBI" id="CHEBI:29105"/>
    </ligand>
</feature>
<feature type="binding site" evidence="1">
    <location>
        <position position="200"/>
    </location>
    <ligand>
        <name>Zn(2+)</name>
        <dbReference type="ChEBI" id="CHEBI:29105"/>
    </ligand>
</feature>
<feature type="binding site" evidence="1">
    <location>
        <position position="205"/>
    </location>
    <ligand>
        <name>Zn(2+)</name>
        <dbReference type="ChEBI" id="CHEBI:29105"/>
    </ligand>
</feature>
<feature type="binding site" evidence="1">
    <location>
        <position position="247"/>
    </location>
    <ligand>
        <name>Zn(2+)</name>
        <dbReference type="ChEBI" id="CHEBI:29105"/>
    </ligand>
</feature>
<organism>
    <name type="scientific">Rhizobium meliloti (strain 1021)</name>
    <name type="common">Ensifer meliloti</name>
    <name type="synonym">Sinorhizobium meliloti</name>
    <dbReference type="NCBI Taxonomy" id="266834"/>
    <lineage>
        <taxon>Bacteria</taxon>
        <taxon>Pseudomonadati</taxon>
        <taxon>Pseudomonadota</taxon>
        <taxon>Alphaproteobacteria</taxon>
        <taxon>Hyphomicrobiales</taxon>
        <taxon>Rhizobiaceae</taxon>
        <taxon>Sinorhizobium/Ensifer group</taxon>
        <taxon>Sinorhizobium</taxon>
    </lineage>
</organism>
<name>KDUI1_RHIME</name>
<geneLocation type="plasmid">
    <name>pSymA</name>
    <name>megaplasmid 1</name>
</geneLocation>
<protein>
    <recommendedName>
        <fullName>4-deoxy-L-threo-5-hexosulose-uronate ketol-isomerase 1</fullName>
        <ecNumber>5.3.1.17</ecNumber>
    </recommendedName>
    <alternativeName>
        <fullName>5-keto-4-deoxyuronate isomerase 1</fullName>
    </alternativeName>
    <alternativeName>
        <fullName>DKI isomerase 1</fullName>
    </alternativeName>
</protein>
<gene>
    <name type="primary">kduI1</name>
    <name type="ordered locus">RA0113</name>
    <name type="ORF">SMa0214</name>
</gene>
<sequence>MTISVSVRQVVGPEDAARRNTQGLRDGFVIEALFQPGRANLTYSHLDRMIVGGVVPAADRLVIDRVAETGTQRFLDRREAAIINIGGSGTVSVGDKDHVLGFQEALYVGMGGGALGFASDDANAPALFYVLSAPAHRSCPTVHITRDMAKKLSLGSAEESNARTINQYVHPDVCESCQLLVGLTMFEPGSVWNTMPAHVHDRRMEVYLYFGMQEATRIFHFMGEPGETRHVVLKNHEAVLSPGWSIHSGAGTGRYAFIWAMAGDNMSFTDMDKVPMEALR</sequence>
<keyword id="KW-0413">Isomerase</keyword>
<keyword id="KW-0479">Metal-binding</keyword>
<keyword id="KW-0614">Plasmid</keyword>
<keyword id="KW-1185">Reference proteome</keyword>
<keyword id="KW-0862">Zinc</keyword>
<accession>Q930T2</accession>
<comment type="function">
    <text evidence="1">Catalyzes the isomerization of 5-dehydro-4-deoxy-D-glucuronate to 3-deoxy-D-glycero-2,5-hexodiulosonate.</text>
</comment>
<comment type="catalytic activity">
    <reaction>
        <text>5-dehydro-4-deoxy-D-glucuronate = 3-deoxy-D-glycero-2,5-hexodiulosonate</text>
        <dbReference type="Rhea" id="RHEA:23896"/>
        <dbReference type="ChEBI" id="CHEBI:17117"/>
        <dbReference type="ChEBI" id="CHEBI:29071"/>
        <dbReference type="EC" id="5.3.1.17"/>
    </reaction>
</comment>
<comment type="cofactor">
    <cofactor evidence="1">
        <name>Zn(2+)</name>
        <dbReference type="ChEBI" id="CHEBI:29105"/>
    </cofactor>
    <text evidence="1">Binds 1 zinc ion per subunit.</text>
</comment>
<comment type="pathway">
    <text>Glycan metabolism; pectin degradation; 2-dehydro-3-deoxy-D-gluconate from pectin: step 4/5.</text>
</comment>
<comment type="similarity">
    <text evidence="2">Belongs to the KduI family.</text>
</comment>
<reference key="1">
    <citation type="journal article" date="2001" name="Proc. Natl. Acad. Sci. U.S.A.">
        <title>Nucleotide sequence and predicted functions of the entire Sinorhizobium meliloti pSymA megaplasmid.</title>
        <authorList>
            <person name="Barnett M.J."/>
            <person name="Fisher R.F."/>
            <person name="Jones T."/>
            <person name="Komp C."/>
            <person name="Abola A.P."/>
            <person name="Barloy-Hubler F."/>
            <person name="Bowser L."/>
            <person name="Capela D."/>
            <person name="Galibert F."/>
            <person name="Gouzy J."/>
            <person name="Gurjal M."/>
            <person name="Hong A."/>
            <person name="Huizar L."/>
            <person name="Hyman R.W."/>
            <person name="Kahn D."/>
            <person name="Kahn M.L."/>
            <person name="Kalman S."/>
            <person name="Keating D.H."/>
            <person name="Palm C."/>
            <person name="Peck M.C."/>
            <person name="Surzycki R."/>
            <person name="Wells D.H."/>
            <person name="Yeh K.-C."/>
            <person name="Davis R.W."/>
            <person name="Federspiel N.A."/>
            <person name="Long S.R."/>
        </authorList>
    </citation>
    <scope>NUCLEOTIDE SEQUENCE [LARGE SCALE GENOMIC DNA]</scope>
    <source>
        <strain>1021</strain>
    </source>
</reference>
<reference key="2">
    <citation type="journal article" date="2001" name="Science">
        <title>The composite genome of the legume symbiont Sinorhizobium meliloti.</title>
        <authorList>
            <person name="Galibert F."/>
            <person name="Finan T.M."/>
            <person name="Long S.R."/>
            <person name="Puehler A."/>
            <person name="Abola P."/>
            <person name="Ampe F."/>
            <person name="Barloy-Hubler F."/>
            <person name="Barnett M.J."/>
            <person name="Becker A."/>
            <person name="Boistard P."/>
            <person name="Bothe G."/>
            <person name="Boutry M."/>
            <person name="Bowser L."/>
            <person name="Buhrmester J."/>
            <person name="Cadieu E."/>
            <person name="Capela D."/>
            <person name="Chain P."/>
            <person name="Cowie A."/>
            <person name="Davis R.W."/>
            <person name="Dreano S."/>
            <person name="Federspiel N.A."/>
            <person name="Fisher R.F."/>
            <person name="Gloux S."/>
            <person name="Godrie T."/>
            <person name="Goffeau A."/>
            <person name="Golding B."/>
            <person name="Gouzy J."/>
            <person name="Gurjal M."/>
            <person name="Hernandez-Lucas I."/>
            <person name="Hong A."/>
            <person name="Huizar L."/>
            <person name="Hyman R.W."/>
            <person name="Jones T."/>
            <person name="Kahn D."/>
            <person name="Kahn M.L."/>
            <person name="Kalman S."/>
            <person name="Keating D.H."/>
            <person name="Kiss E."/>
            <person name="Komp C."/>
            <person name="Lelaure V."/>
            <person name="Masuy D."/>
            <person name="Palm C."/>
            <person name="Peck M.C."/>
            <person name="Pohl T.M."/>
            <person name="Portetelle D."/>
            <person name="Purnelle B."/>
            <person name="Ramsperger U."/>
            <person name="Surzycki R."/>
            <person name="Thebault P."/>
            <person name="Vandenbol M."/>
            <person name="Vorhoelter F.J."/>
            <person name="Weidner S."/>
            <person name="Wells D.H."/>
            <person name="Wong K."/>
            <person name="Yeh K.-C."/>
            <person name="Batut J."/>
        </authorList>
    </citation>
    <scope>NUCLEOTIDE SEQUENCE [LARGE SCALE GENOMIC DNA]</scope>
    <source>
        <strain>1021</strain>
    </source>
</reference>
<proteinExistence type="inferred from homology"/>